<name>Y1316_THEGJ</name>
<proteinExistence type="inferred from homology"/>
<feature type="chain" id="PRO_1000212148" description="Putative HTH-type transcriptional regulatory protein TGAM_1316">
    <location>
        <begin position="1"/>
        <end position="317"/>
    </location>
</feature>
<feature type="domain" description="HTH cro/C1-type" evidence="1">
    <location>
        <begin position="131"/>
        <end position="189"/>
    </location>
</feature>
<feature type="DNA-binding region" description="H-T-H motif" evidence="1">
    <location>
        <begin position="142"/>
        <end position="161"/>
    </location>
</feature>
<dbReference type="EMBL" id="CP001398">
    <property type="protein sequence ID" value="ACS33818.1"/>
    <property type="molecule type" value="Genomic_DNA"/>
</dbReference>
<dbReference type="RefSeq" id="WP_015858930.1">
    <property type="nucleotide sequence ID" value="NC_012804.1"/>
</dbReference>
<dbReference type="SMR" id="C5A6F6"/>
<dbReference type="STRING" id="593117.TGAM_1316"/>
<dbReference type="PaxDb" id="593117-TGAM_1316"/>
<dbReference type="GeneID" id="7988375"/>
<dbReference type="KEGG" id="tga:TGAM_1316"/>
<dbReference type="PATRIC" id="fig|593117.10.peg.1314"/>
<dbReference type="eggNOG" id="arCOG04152">
    <property type="taxonomic scope" value="Archaea"/>
</dbReference>
<dbReference type="HOGENOM" id="CLU_075726_0_0_2"/>
<dbReference type="OrthoDB" id="31424at2157"/>
<dbReference type="Proteomes" id="UP000001488">
    <property type="component" value="Chromosome"/>
</dbReference>
<dbReference type="GO" id="GO:0003677">
    <property type="term" value="F:DNA binding"/>
    <property type="evidence" value="ECO:0007669"/>
    <property type="project" value="UniProtKB-KW"/>
</dbReference>
<dbReference type="GO" id="GO:0003700">
    <property type="term" value="F:DNA-binding transcription factor activity"/>
    <property type="evidence" value="ECO:0007669"/>
    <property type="project" value="UniProtKB-UniRule"/>
</dbReference>
<dbReference type="CDD" id="cd00093">
    <property type="entry name" value="HTH_XRE"/>
    <property type="match status" value="1"/>
</dbReference>
<dbReference type="Gene3D" id="1.10.260.40">
    <property type="entry name" value="lambda repressor-like DNA-binding domains"/>
    <property type="match status" value="1"/>
</dbReference>
<dbReference type="HAMAP" id="MF_00584">
    <property type="entry name" value="HTH_type_cro_C1"/>
    <property type="match status" value="1"/>
</dbReference>
<dbReference type="InterPro" id="IPR020886">
    <property type="entry name" value="Arc_TR_HTH"/>
</dbReference>
<dbReference type="InterPro" id="IPR001387">
    <property type="entry name" value="Cro/C1-type_HTH"/>
</dbReference>
<dbReference type="InterPro" id="IPR010982">
    <property type="entry name" value="Lambda_DNA-bd_dom_sf"/>
</dbReference>
<dbReference type="InterPro" id="IPR011335">
    <property type="entry name" value="Restrct_endonuc-II-like"/>
</dbReference>
<dbReference type="NCBIfam" id="NF003162">
    <property type="entry name" value="PRK04140.1"/>
    <property type="match status" value="1"/>
</dbReference>
<dbReference type="Pfam" id="PF01381">
    <property type="entry name" value="HTH_3"/>
    <property type="match status" value="1"/>
</dbReference>
<dbReference type="SMART" id="SM00530">
    <property type="entry name" value="HTH_XRE"/>
    <property type="match status" value="1"/>
</dbReference>
<dbReference type="SUPFAM" id="SSF47413">
    <property type="entry name" value="lambda repressor-like DNA-binding domains"/>
    <property type="match status" value="1"/>
</dbReference>
<dbReference type="SUPFAM" id="SSF52980">
    <property type="entry name" value="Restriction endonuclease-like"/>
    <property type="match status" value="1"/>
</dbReference>
<dbReference type="PROSITE" id="PS50943">
    <property type="entry name" value="HTH_CROC1"/>
    <property type="match status" value="1"/>
</dbReference>
<reference key="1">
    <citation type="journal article" date="2007" name="Genome Biol.">
        <title>Genome analysis and genome-wide proteomics of Thermococcus gammatolerans, the most radioresistant organism known amongst the Archaea.</title>
        <authorList>
            <person name="Zivanovic Y."/>
            <person name="Armengaud J."/>
            <person name="Lagorce A."/>
            <person name="Leplat C."/>
            <person name="Guerin P."/>
            <person name="Dutertre M."/>
            <person name="Anthouard V."/>
            <person name="Forterre P."/>
            <person name="Wincker P."/>
            <person name="Confalonieri F."/>
        </authorList>
    </citation>
    <scope>NUCLEOTIDE SEQUENCE [LARGE SCALE GENOMIC DNA]</scope>
    <source>
        <strain>DSM 15229 / JCM 11827 / EJ3</strain>
    </source>
</reference>
<protein>
    <recommendedName>
        <fullName evidence="1">Putative HTH-type transcriptional regulatory protein TGAM_1316</fullName>
    </recommendedName>
</protein>
<evidence type="ECO:0000255" key="1">
    <source>
        <dbReference type="HAMAP-Rule" id="MF_00584"/>
    </source>
</evidence>
<gene>
    <name type="ordered locus">TGAM_1316</name>
</gene>
<organism>
    <name type="scientific">Thermococcus gammatolerans (strain DSM 15229 / JCM 11827 / EJ3)</name>
    <dbReference type="NCBI Taxonomy" id="593117"/>
    <lineage>
        <taxon>Archaea</taxon>
        <taxon>Methanobacteriati</taxon>
        <taxon>Methanobacteriota</taxon>
        <taxon>Thermococci</taxon>
        <taxon>Thermococcales</taxon>
        <taxon>Thermococcaceae</taxon>
        <taxon>Thermococcus</taxon>
    </lineage>
</organism>
<sequence>MERERLIDIVARILRRSGLKVARVELRGGCFDLVASGLFTLLFIKVVTNIDTVTPEQAEDLKRLAKLFKATPMIVGVRTKNSEIEEGVIYERFGIYALNPATLYRVLIEGELPAIFAERGGLYVRINGELLKKLREKHGYSVGELASLLGVSRKSLLNYERNEQAVSLEVALRMEELFDEPIAEPIDVLRAKVDVELKPAEPETPLEQEVFEKLKELGMGVVKVKRAPFNALSREDEVTILTGIDEKKTRSTVRRAEMVAEVGRIINTGGLFVLEKSKMEVVSEVPLIPKESLKEIKDVDELIELIEGLKREIRKSI</sequence>
<accession>C5A6F6</accession>
<keyword id="KW-0238">DNA-binding</keyword>
<keyword id="KW-1185">Reference proteome</keyword>
<keyword id="KW-0804">Transcription</keyword>
<keyword id="KW-0805">Transcription regulation</keyword>